<evidence type="ECO:0000255" key="1">
    <source>
        <dbReference type="HAMAP-Rule" id="MF_00015"/>
    </source>
</evidence>
<proteinExistence type="inferred from homology"/>
<protein>
    <recommendedName>
        <fullName evidence="1">LexA repressor</fullName>
        <ecNumber evidence="1">3.4.21.88</ecNumber>
    </recommendedName>
</protein>
<feature type="chain" id="PRO_0000170017" description="LexA repressor">
    <location>
        <begin position="1"/>
        <end position="231"/>
    </location>
</feature>
<feature type="DNA-binding region" description="H-T-H motif" evidence="1">
    <location>
        <begin position="26"/>
        <end position="46"/>
    </location>
</feature>
<feature type="active site" description="For autocatalytic cleavage activity" evidence="1">
    <location>
        <position position="152"/>
    </location>
</feature>
<feature type="active site" description="For autocatalytic cleavage activity" evidence="1">
    <location>
        <position position="190"/>
    </location>
</feature>
<feature type="site" description="Cleavage; by autolysis" evidence="1">
    <location>
        <begin position="117"/>
        <end position="118"/>
    </location>
</feature>
<comment type="function">
    <text evidence="1">Represses a number of genes involved in the response to DNA damage (SOS response), including recA and lexA. In the presence of single-stranded DNA, RecA interacts with LexA causing an autocatalytic cleavage which disrupts the DNA-binding part of LexA, leading to derepression of the SOS regulon and eventually DNA repair.</text>
</comment>
<comment type="catalytic activity">
    <reaction evidence="1">
        <text>Hydrolysis of Ala-|-Gly bond in repressor LexA.</text>
        <dbReference type="EC" id="3.4.21.88"/>
    </reaction>
</comment>
<comment type="subunit">
    <text evidence="1">Homodimer.</text>
</comment>
<comment type="similarity">
    <text evidence="1">Belongs to the peptidase S24 family.</text>
</comment>
<gene>
    <name evidence="1" type="primary">lexA</name>
    <name type="ordered locus">blr4826</name>
</gene>
<keyword id="KW-0068">Autocatalytic cleavage</keyword>
<keyword id="KW-0227">DNA damage</keyword>
<keyword id="KW-0234">DNA repair</keyword>
<keyword id="KW-0235">DNA replication</keyword>
<keyword id="KW-0238">DNA-binding</keyword>
<keyword id="KW-0378">Hydrolase</keyword>
<keyword id="KW-1185">Reference proteome</keyword>
<keyword id="KW-0678">Repressor</keyword>
<keyword id="KW-0742">SOS response</keyword>
<keyword id="KW-0804">Transcription</keyword>
<keyword id="KW-0805">Transcription regulation</keyword>
<sequence>MLTRKQYELLRFISERLKESGVPPSFDEMKDALDLRSKSGIHRLITALEERGFIRRLPNRARAIEVIKLPELQAAAGNRRGFTPSVIEGNLGKVRASSSADEGERPVAVPVMGRIAAGTPIEALQTRSHTISVPPDMLGSGEHYALEVRGDSMVEAGILDGDMALIQRNESADTGDIVVALIDDEEATLKRFRRRGASIALEPANAAYEVRILPPNRVKIQGKLIGLYRKY</sequence>
<name>LEXA_BRADU</name>
<dbReference type="EC" id="3.4.21.88" evidence="1"/>
<dbReference type="EMBL" id="BA000040">
    <property type="protein sequence ID" value="BAC50091.1"/>
    <property type="molecule type" value="Genomic_DNA"/>
</dbReference>
<dbReference type="RefSeq" id="NP_771466.1">
    <property type="nucleotide sequence ID" value="NC_004463.1"/>
</dbReference>
<dbReference type="RefSeq" id="WP_011087594.1">
    <property type="nucleotide sequence ID" value="NC_004463.1"/>
</dbReference>
<dbReference type="SMR" id="Q89KS7"/>
<dbReference type="FunCoup" id="Q89KS7">
    <property type="interactions" value="389"/>
</dbReference>
<dbReference type="STRING" id="224911.AAV28_21440"/>
<dbReference type="MEROPS" id="S24.001"/>
<dbReference type="EnsemblBacteria" id="BAC50091">
    <property type="protein sequence ID" value="BAC50091"/>
    <property type="gene ID" value="BAC50091"/>
</dbReference>
<dbReference type="GeneID" id="46491832"/>
<dbReference type="KEGG" id="bja:blr4826"/>
<dbReference type="PATRIC" id="fig|224911.44.peg.4671"/>
<dbReference type="eggNOG" id="COG1974">
    <property type="taxonomic scope" value="Bacteria"/>
</dbReference>
<dbReference type="HOGENOM" id="CLU_066192_45_2_5"/>
<dbReference type="InParanoid" id="Q89KS7"/>
<dbReference type="OrthoDB" id="9802364at2"/>
<dbReference type="PhylomeDB" id="Q89KS7"/>
<dbReference type="Proteomes" id="UP000002526">
    <property type="component" value="Chromosome"/>
</dbReference>
<dbReference type="GO" id="GO:0032993">
    <property type="term" value="C:protein-DNA complex"/>
    <property type="evidence" value="ECO:0000318"/>
    <property type="project" value="GO_Central"/>
</dbReference>
<dbReference type="GO" id="GO:0001217">
    <property type="term" value="F:DNA-binding transcription repressor activity"/>
    <property type="evidence" value="ECO:0000318"/>
    <property type="project" value="GO_Central"/>
</dbReference>
<dbReference type="GO" id="GO:0043565">
    <property type="term" value="F:sequence-specific DNA binding"/>
    <property type="evidence" value="ECO:0000318"/>
    <property type="project" value="GO_Central"/>
</dbReference>
<dbReference type="GO" id="GO:0004252">
    <property type="term" value="F:serine-type endopeptidase activity"/>
    <property type="evidence" value="ECO:0007669"/>
    <property type="project" value="UniProtKB-UniRule"/>
</dbReference>
<dbReference type="GO" id="GO:0006281">
    <property type="term" value="P:DNA repair"/>
    <property type="evidence" value="ECO:0007669"/>
    <property type="project" value="UniProtKB-UniRule"/>
</dbReference>
<dbReference type="GO" id="GO:0006260">
    <property type="term" value="P:DNA replication"/>
    <property type="evidence" value="ECO:0007669"/>
    <property type="project" value="UniProtKB-UniRule"/>
</dbReference>
<dbReference type="GO" id="GO:0045892">
    <property type="term" value="P:negative regulation of DNA-templated transcription"/>
    <property type="evidence" value="ECO:0000318"/>
    <property type="project" value="GO_Central"/>
</dbReference>
<dbReference type="GO" id="GO:0006508">
    <property type="term" value="P:proteolysis"/>
    <property type="evidence" value="ECO:0007669"/>
    <property type="project" value="InterPro"/>
</dbReference>
<dbReference type="GO" id="GO:0009432">
    <property type="term" value="P:SOS response"/>
    <property type="evidence" value="ECO:0000318"/>
    <property type="project" value="GO_Central"/>
</dbReference>
<dbReference type="CDD" id="cd06529">
    <property type="entry name" value="S24_LexA-like"/>
    <property type="match status" value="1"/>
</dbReference>
<dbReference type="FunFam" id="1.10.10.10:FF:000102">
    <property type="entry name" value="LexA repressor"/>
    <property type="match status" value="1"/>
</dbReference>
<dbReference type="FunFam" id="2.10.109.10:FF:000001">
    <property type="entry name" value="LexA repressor"/>
    <property type="match status" value="1"/>
</dbReference>
<dbReference type="Gene3D" id="2.10.109.10">
    <property type="entry name" value="Umud Fragment, subunit A"/>
    <property type="match status" value="1"/>
</dbReference>
<dbReference type="Gene3D" id="1.10.10.10">
    <property type="entry name" value="Winged helix-like DNA-binding domain superfamily/Winged helix DNA-binding domain"/>
    <property type="match status" value="1"/>
</dbReference>
<dbReference type="HAMAP" id="MF_00015">
    <property type="entry name" value="LexA"/>
    <property type="match status" value="1"/>
</dbReference>
<dbReference type="InterPro" id="IPR006200">
    <property type="entry name" value="LexA"/>
</dbReference>
<dbReference type="InterPro" id="IPR039418">
    <property type="entry name" value="LexA-like"/>
</dbReference>
<dbReference type="InterPro" id="IPR036286">
    <property type="entry name" value="LexA/Signal_pep-like_sf"/>
</dbReference>
<dbReference type="InterPro" id="IPR006199">
    <property type="entry name" value="LexA_DNA-bd_dom"/>
</dbReference>
<dbReference type="InterPro" id="IPR050077">
    <property type="entry name" value="LexA_repressor"/>
</dbReference>
<dbReference type="InterPro" id="IPR006197">
    <property type="entry name" value="Peptidase_S24_LexA"/>
</dbReference>
<dbReference type="InterPro" id="IPR015927">
    <property type="entry name" value="Peptidase_S24_S26A/B/C"/>
</dbReference>
<dbReference type="InterPro" id="IPR036388">
    <property type="entry name" value="WH-like_DNA-bd_sf"/>
</dbReference>
<dbReference type="InterPro" id="IPR036390">
    <property type="entry name" value="WH_DNA-bd_sf"/>
</dbReference>
<dbReference type="NCBIfam" id="TIGR00498">
    <property type="entry name" value="lexA"/>
    <property type="match status" value="1"/>
</dbReference>
<dbReference type="PANTHER" id="PTHR33516">
    <property type="entry name" value="LEXA REPRESSOR"/>
    <property type="match status" value="1"/>
</dbReference>
<dbReference type="PANTHER" id="PTHR33516:SF2">
    <property type="entry name" value="LEXA REPRESSOR-RELATED"/>
    <property type="match status" value="1"/>
</dbReference>
<dbReference type="Pfam" id="PF01726">
    <property type="entry name" value="LexA_DNA_bind"/>
    <property type="match status" value="1"/>
</dbReference>
<dbReference type="Pfam" id="PF00717">
    <property type="entry name" value="Peptidase_S24"/>
    <property type="match status" value="1"/>
</dbReference>
<dbReference type="PRINTS" id="PR00726">
    <property type="entry name" value="LEXASERPTASE"/>
</dbReference>
<dbReference type="SUPFAM" id="SSF51306">
    <property type="entry name" value="LexA/Signal peptidase"/>
    <property type="match status" value="1"/>
</dbReference>
<dbReference type="SUPFAM" id="SSF46785">
    <property type="entry name" value="Winged helix' DNA-binding domain"/>
    <property type="match status" value="1"/>
</dbReference>
<accession>Q89KS7</accession>
<reference key="1">
    <citation type="journal article" date="2002" name="DNA Res.">
        <title>Complete genomic sequence of nitrogen-fixing symbiotic bacterium Bradyrhizobium japonicum USDA110.</title>
        <authorList>
            <person name="Kaneko T."/>
            <person name="Nakamura Y."/>
            <person name="Sato S."/>
            <person name="Minamisawa K."/>
            <person name="Uchiumi T."/>
            <person name="Sasamoto S."/>
            <person name="Watanabe A."/>
            <person name="Idesawa K."/>
            <person name="Iriguchi M."/>
            <person name="Kawashima K."/>
            <person name="Kohara M."/>
            <person name="Matsumoto M."/>
            <person name="Shimpo S."/>
            <person name="Tsuruoka H."/>
            <person name="Wada T."/>
            <person name="Yamada M."/>
            <person name="Tabata S."/>
        </authorList>
    </citation>
    <scope>NUCLEOTIDE SEQUENCE [LARGE SCALE GENOMIC DNA]</scope>
    <source>
        <strain>JCM 10833 / BCRC 13528 / IAM 13628 / NBRC 14792 / USDA 110</strain>
    </source>
</reference>
<organism>
    <name type="scientific">Bradyrhizobium diazoefficiens (strain JCM 10833 / BCRC 13528 / IAM 13628 / NBRC 14792 / USDA 110)</name>
    <dbReference type="NCBI Taxonomy" id="224911"/>
    <lineage>
        <taxon>Bacteria</taxon>
        <taxon>Pseudomonadati</taxon>
        <taxon>Pseudomonadota</taxon>
        <taxon>Alphaproteobacteria</taxon>
        <taxon>Hyphomicrobiales</taxon>
        <taxon>Nitrobacteraceae</taxon>
        <taxon>Bradyrhizobium</taxon>
    </lineage>
</organism>